<name>GLND_XANC8</name>
<keyword id="KW-0378">Hydrolase</keyword>
<keyword id="KW-0460">Magnesium</keyword>
<keyword id="KW-0511">Multifunctional enzyme</keyword>
<keyword id="KW-0548">Nucleotidyltransferase</keyword>
<keyword id="KW-0677">Repeat</keyword>
<keyword id="KW-0808">Transferase</keyword>
<proteinExistence type="inferred from homology"/>
<evidence type="ECO:0000255" key="1">
    <source>
        <dbReference type="HAMAP-Rule" id="MF_00277"/>
    </source>
</evidence>
<evidence type="ECO:0000255" key="2">
    <source>
        <dbReference type="PROSITE-ProRule" id="PRU01175"/>
    </source>
</evidence>
<protein>
    <recommendedName>
        <fullName evidence="1">Bifunctional uridylyltransferase/uridylyl-removing enzyme</fullName>
        <shortName evidence="1">UTase/UR</shortName>
    </recommendedName>
    <alternativeName>
        <fullName evidence="1">Bifunctional [protein-PII] modification enzyme</fullName>
    </alternativeName>
    <alternativeName>
        <fullName evidence="1">Bifunctional nitrogen sensor protein</fullName>
    </alternativeName>
    <domain>
        <recommendedName>
            <fullName evidence="1">[Protein-PII] uridylyltransferase</fullName>
            <shortName evidence="1">PII uridylyltransferase</shortName>
            <shortName evidence="1">UTase</shortName>
            <ecNumber evidence="1">2.7.7.59</ecNumber>
        </recommendedName>
    </domain>
    <domain>
        <recommendedName>
            <fullName evidence="1">[Protein-PII]-UMP uridylyl-removing enzyme</fullName>
            <shortName evidence="1">UR</shortName>
            <ecNumber evidence="1">3.1.4.-</ecNumber>
        </recommendedName>
    </domain>
</protein>
<accession>Q4USS0</accession>
<reference key="1">
    <citation type="journal article" date="2005" name="Genome Res.">
        <title>Comparative and functional genomic analyses of the pathogenicity of phytopathogen Xanthomonas campestris pv. campestris.</title>
        <authorList>
            <person name="Qian W."/>
            <person name="Jia Y."/>
            <person name="Ren S.-X."/>
            <person name="He Y.-Q."/>
            <person name="Feng J.-X."/>
            <person name="Lu L.-F."/>
            <person name="Sun Q."/>
            <person name="Ying G."/>
            <person name="Tang D.-J."/>
            <person name="Tang H."/>
            <person name="Wu W."/>
            <person name="Hao P."/>
            <person name="Wang L."/>
            <person name="Jiang B.-L."/>
            <person name="Zeng S."/>
            <person name="Gu W.-Y."/>
            <person name="Lu G."/>
            <person name="Rong L."/>
            <person name="Tian Y."/>
            <person name="Yao Z."/>
            <person name="Fu G."/>
            <person name="Chen B."/>
            <person name="Fang R."/>
            <person name="Qiang B."/>
            <person name="Chen Z."/>
            <person name="Zhao G.-P."/>
            <person name="Tang J.-L."/>
            <person name="He C."/>
        </authorList>
    </citation>
    <scope>NUCLEOTIDE SEQUENCE [LARGE SCALE GENOMIC DNA]</scope>
    <source>
        <strain>8004</strain>
    </source>
</reference>
<feature type="chain" id="PRO_0000192778" description="Bifunctional uridylyltransferase/uridylyl-removing enzyme">
    <location>
        <begin position="1"/>
        <end position="869"/>
    </location>
</feature>
<feature type="domain" description="HD" evidence="2">
    <location>
        <begin position="450"/>
        <end position="572"/>
    </location>
</feature>
<feature type="domain" description="ACT 1" evidence="1">
    <location>
        <begin position="692"/>
        <end position="771"/>
    </location>
</feature>
<feature type="domain" description="ACT 2" evidence="1">
    <location>
        <begin position="798"/>
        <end position="869"/>
    </location>
</feature>
<feature type="region of interest" description="Uridylyltransferase">
    <location>
        <begin position="1"/>
        <end position="332"/>
    </location>
</feature>
<feature type="region of interest" description="Uridylyl-removing">
    <location>
        <begin position="333"/>
        <end position="691"/>
    </location>
</feature>
<gene>
    <name evidence="1" type="primary">glnD</name>
    <name type="ordered locus">XC_2855</name>
</gene>
<dbReference type="EC" id="2.7.7.59" evidence="1"/>
<dbReference type="EC" id="3.1.4.-" evidence="1"/>
<dbReference type="EMBL" id="CP000050">
    <property type="protein sequence ID" value="AAY49903.1"/>
    <property type="molecule type" value="Genomic_DNA"/>
</dbReference>
<dbReference type="RefSeq" id="WP_011036575.1">
    <property type="nucleotide sequence ID" value="NZ_CP155948.1"/>
</dbReference>
<dbReference type="SMR" id="Q4USS0"/>
<dbReference type="KEGG" id="xcb:XC_2855"/>
<dbReference type="HOGENOM" id="CLU_012833_0_0_6"/>
<dbReference type="Proteomes" id="UP000000420">
    <property type="component" value="Chromosome"/>
</dbReference>
<dbReference type="GO" id="GO:0008773">
    <property type="term" value="F:[protein-PII] uridylyltransferase activity"/>
    <property type="evidence" value="ECO:0007669"/>
    <property type="project" value="UniProtKB-UniRule"/>
</dbReference>
<dbReference type="GO" id="GO:0008081">
    <property type="term" value="F:phosphoric diester hydrolase activity"/>
    <property type="evidence" value="ECO:0007669"/>
    <property type="project" value="UniProtKB-UniRule"/>
</dbReference>
<dbReference type="GO" id="GO:0006808">
    <property type="term" value="P:regulation of nitrogen utilization"/>
    <property type="evidence" value="ECO:0007669"/>
    <property type="project" value="UniProtKB-UniRule"/>
</dbReference>
<dbReference type="CDD" id="cd04899">
    <property type="entry name" value="ACT_ACR-UUR-like_2"/>
    <property type="match status" value="1"/>
</dbReference>
<dbReference type="CDD" id="cd04900">
    <property type="entry name" value="ACT_UUR-like_1"/>
    <property type="match status" value="1"/>
</dbReference>
<dbReference type="CDD" id="cd00077">
    <property type="entry name" value="HDc"/>
    <property type="match status" value="1"/>
</dbReference>
<dbReference type="CDD" id="cd05401">
    <property type="entry name" value="NT_GlnE_GlnD_like"/>
    <property type="match status" value="1"/>
</dbReference>
<dbReference type="Gene3D" id="3.30.70.260">
    <property type="match status" value="1"/>
</dbReference>
<dbReference type="Gene3D" id="1.10.3090.10">
    <property type="entry name" value="cca-adding enzyme, domain 2"/>
    <property type="match status" value="1"/>
</dbReference>
<dbReference type="HAMAP" id="MF_00277">
    <property type="entry name" value="PII_uridylyl_transf"/>
    <property type="match status" value="1"/>
</dbReference>
<dbReference type="InterPro" id="IPR045865">
    <property type="entry name" value="ACT-like_dom_sf"/>
</dbReference>
<dbReference type="InterPro" id="IPR002912">
    <property type="entry name" value="ACT_dom"/>
</dbReference>
<dbReference type="InterPro" id="IPR003607">
    <property type="entry name" value="HD/PDEase_dom"/>
</dbReference>
<dbReference type="InterPro" id="IPR006674">
    <property type="entry name" value="HD_domain"/>
</dbReference>
<dbReference type="InterPro" id="IPR043519">
    <property type="entry name" value="NT_sf"/>
</dbReference>
<dbReference type="InterPro" id="IPR013546">
    <property type="entry name" value="PII_UdlTrfase/GS_AdlTrfase"/>
</dbReference>
<dbReference type="InterPro" id="IPR002934">
    <property type="entry name" value="Polymerase_NTP_transf_dom"/>
</dbReference>
<dbReference type="InterPro" id="IPR010043">
    <property type="entry name" value="UTase/UR"/>
</dbReference>
<dbReference type="NCBIfam" id="NF003347">
    <property type="entry name" value="PRK04374.1"/>
    <property type="match status" value="1"/>
</dbReference>
<dbReference type="NCBIfam" id="TIGR01693">
    <property type="entry name" value="UTase_glnD"/>
    <property type="match status" value="1"/>
</dbReference>
<dbReference type="PANTHER" id="PTHR47320">
    <property type="entry name" value="BIFUNCTIONAL URIDYLYLTRANSFERASE/URIDYLYL-REMOVING ENZYME"/>
    <property type="match status" value="1"/>
</dbReference>
<dbReference type="PANTHER" id="PTHR47320:SF1">
    <property type="entry name" value="BIFUNCTIONAL URIDYLYLTRANSFERASE_URIDYLYL-REMOVING ENZYME"/>
    <property type="match status" value="1"/>
</dbReference>
<dbReference type="Pfam" id="PF01842">
    <property type="entry name" value="ACT"/>
    <property type="match status" value="1"/>
</dbReference>
<dbReference type="Pfam" id="PF08335">
    <property type="entry name" value="GlnD_UR_UTase"/>
    <property type="match status" value="1"/>
</dbReference>
<dbReference type="Pfam" id="PF01966">
    <property type="entry name" value="HD"/>
    <property type="match status" value="1"/>
</dbReference>
<dbReference type="Pfam" id="PF01909">
    <property type="entry name" value="NTP_transf_2"/>
    <property type="match status" value="1"/>
</dbReference>
<dbReference type="PIRSF" id="PIRSF006288">
    <property type="entry name" value="PII_uridyltransf"/>
    <property type="match status" value="1"/>
</dbReference>
<dbReference type="SMART" id="SM00471">
    <property type="entry name" value="HDc"/>
    <property type="match status" value="1"/>
</dbReference>
<dbReference type="SUPFAM" id="SSF55021">
    <property type="entry name" value="ACT-like"/>
    <property type="match status" value="2"/>
</dbReference>
<dbReference type="SUPFAM" id="SSF109604">
    <property type="entry name" value="HD-domain/PDEase-like"/>
    <property type="match status" value="1"/>
</dbReference>
<dbReference type="SUPFAM" id="SSF81301">
    <property type="entry name" value="Nucleotidyltransferase"/>
    <property type="match status" value="1"/>
</dbReference>
<dbReference type="SUPFAM" id="SSF81593">
    <property type="entry name" value="Nucleotidyltransferase substrate binding subunit/domain"/>
    <property type="match status" value="1"/>
</dbReference>
<dbReference type="PROSITE" id="PS51671">
    <property type="entry name" value="ACT"/>
    <property type="match status" value="2"/>
</dbReference>
<dbReference type="PROSITE" id="PS51831">
    <property type="entry name" value="HD"/>
    <property type="match status" value="1"/>
</dbReference>
<sequence>MTATPADRPDPGVAGDADWAAEARPLLVHADMRLCKRFDQGEPTERLLALRARAVDQLMRNAWTRCIPADAGLSLHAVGGYGRGELFPRSDVDLLVLGETAAQQRHEQALARLFALLWDVGLPISHAVRSPAQCTSAAADQTVLTALIESRPLVADAQARAALAAAIAPQQVWPPRAFFQAKREELHARHQRFGDTADNLEPDIKDGPGGLRDLQTLGWMALRAFGVKDLEALVGLGHVGMDEAAALRREREELARLRYGLHLVANRPEERLRFDYQKTLAERLGFADDPESLGVEKMMQRFYRSAALIRRISDRLLQRFEEQFDGEAVPVQLDAGFSLRRGYLTADADTWPDGDVVQVFALFAQWAAHREVRGLHSLTARALAEVLRDLPAYDVADAIARDRFMALLRGPRAVETLNRMARLGVLGQWIPAFASVSGRMQFDLFHVYTVDQHTLMVLRNIALFAAGRADERFSITHEVWPRLRKPELLLLAGLFHDIAKGRGGDHSELGAVDARAFCLAHRLSEGDTELVTWLVEQHLRMSVTAQKQDISDPEVIHRFATLVGTRERLDYLYLLTCADIAGTSPKLWNAWKDRLLADLYFAARRALREGLEHPPPREERLREARESARTLMQAQGHDDATIDRQFAGMPDENFLRFRPEQLAWQAASLIEVQIGQTLVKARRAVPDNDALEVFVYSPDRDGLFSAIVATLDRKGYGIHRARVLDAPHDAIFDVFEVLPQDSSADGDPQRLAAALRQVLAGDLLKVRPSRRAVPRQLRHFRFAPRVEFSESAGGRRTRISLVAPDRPGLLADVAHVLRMQHLRVHDARIATFGERAEDQFQITDEHDRPLPDAARQALRDALCACLDPT</sequence>
<organism>
    <name type="scientific">Xanthomonas campestris pv. campestris (strain 8004)</name>
    <dbReference type="NCBI Taxonomy" id="314565"/>
    <lineage>
        <taxon>Bacteria</taxon>
        <taxon>Pseudomonadati</taxon>
        <taxon>Pseudomonadota</taxon>
        <taxon>Gammaproteobacteria</taxon>
        <taxon>Lysobacterales</taxon>
        <taxon>Lysobacteraceae</taxon>
        <taxon>Xanthomonas</taxon>
    </lineage>
</organism>
<comment type="function">
    <text evidence="1">Modifies, by uridylylation and deuridylylation, the PII regulatory proteins (GlnB and homologs), in response to the nitrogen status of the cell that GlnD senses through the glutamine level. Under low glutamine levels, catalyzes the conversion of the PII proteins and UTP to PII-UMP and PPi, while under higher glutamine levels, GlnD hydrolyzes PII-UMP to PII and UMP (deuridylylation). Thus, controls uridylylation state and activity of the PII proteins, and plays an important role in the regulation of nitrogen assimilation and metabolism.</text>
</comment>
<comment type="catalytic activity">
    <reaction evidence="1">
        <text>[protein-PII]-L-tyrosine + UTP = [protein-PII]-uridylyl-L-tyrosine + diphosphate</text>
        <dbReference type="Rhea" id="RHEA:13673"/>
        <dbReference type="Rhea" id="RHEA-COMP:12147"/>
        <dbReference type="Rhea" id="RHEA-COMP:12148"/>
        <dbReference type="ChEBI" id="CHEBI:33019"/>
        <dbReference type="ChEBI" id="CHEBI:46398"/>
        <dbReference type="ChEBI" id="CHEBI:46858"/>
        <dbReference type="ChEBI" id="CHEBI:90602"/>
        <dbReference type="EC" id="2.7.7.59"/>
    </reaction>
</comment>
<comment type="catalytic activity">
    <reaction evidence="1">
        <text>[protein-PII]-uridylyl-L-tyrosine + H2O = [protein-PII]-L-tyrosine + UMP + H(+)</text>
        <dbReference type="Rhea" id="RHEA:48600"/>
        <dbReference type="Rhea" id="RHEA-COMP:12147"/>
        <dbReference type="Rhea" id="RHEA-COMP:12148"/>
        <dbReference type="ChEBI" id="CHEBI:15377"/>
        <dbReference type="ChEBI" id="CHEBI:15378"/>
        <dbReference type="ChEBI" id="CHEBI:46858"/>
        <dbReference type="ChEBI" id="CHEBI:57865"/>
        <dbReference type="ChEBI" id="CHEBI:90602"/>
    </reaction>
</comment>
<comment type="cofactor">
    <cofactor evidence="1">
        <name>Mg(2+)</name>
        <dbReference type="ChEBI" id="CHEBI:18420"/>
    </cofactor>
</comment>
<comment type="activity regulation">
    <text evidence="1">Uridylyltransferase (UTase) activity is inhibited by glutamine, while glutamine activates uridylyl-removing (UR) activity.</text>
</comment>
<comment type="domain">
    <text evidence="1">Has four distinct domains: an N-terminal nucleotidyltransferase (NT) domain responsible for UTase activity, a central HD domain that encodes UR activity, and two C-terminal ACT domains that seem to have a role in glutamine sensing.</text>
</comment>
<comment type="similarity">
    <text evidence="1">Belongs to the GlnD family.</text>
</comment>